<protein>
    <recommendedName>
        <fullName evidence="1">Diaminopimelate epimerase</fullName>
        <shortName evidence="1">DAP epimerase</shortName>
        <ecNumber evidence="1">5.1.1.7</ecNumber>
    </recommendedName>
    <alternativeName>
        <fullName evidence="1">PLP-independent amino acid racemase</fullName>
    </alternativeName>
</protein>
<accession>Q7VPN0</accession>
<proteinExistence type="inferred from homology"/>
<keyword id="KW-0028">Amino-acid biosynthesis</keyword>
<keyword id="KW-0963">Cytoplasm</keyword>
<keyword id="KW-0413">Isomerase</keyword>
<keyword id="KW-0457">Lysine biosynthesis</keyword>
<keyword id="KW-1185">Reference proteome</keyword>
<organism>
    <name type="scientific">Haemophilus ducreyi (strain 35000HP / ATCC 700724)</name>
    <dbReference type="NCBI Taxonomy" id="233412"/>
    <lineage>
        <taxon>Bacteria</taxon>
        <taxon>Pseudomonadati</taxon>
        <taxon>Pseudomonadota</taxon>
        <taxon>Gammaproteobacteria</taxon>
        <taxon>Pasteurellales</taxon>
        <taxon>Pasteurellaceae</taxon>
        <taxon>Haemophilus</taxon>
    </lineage>
</organism>
<evidence type="ECO:0000255" key="1">
    <source>
        <dbReference type="HAMAP-Rule" id="MF_00197"/>
    </source>
</evidence>
<reference key="1">
    <citation type="submission" date="2003-06" db="EMBL/GenBank/DDBJ databases">
        <title>The complete genome sequence of Haemophilus ducreyi.</title>
        <authorList>
            <person name="Munson R.S. Jr."/>
            <person name="Ray W.C."/>
            <person name="Mahairas G."/>
            <person name="Sabo P."/>
            <person name="Mungur R."/>
            <person name="Johnson L."/>
            <person name="Nguyen D."/>
            <person name="Wang J."/>
            <person name="Forst C."/>
            <person name="Hood L."/>
        </authorList>
    </citation>
    <scope>NUCLEOTIDE SEQUENCE [LARGE SCALE GENOMIC DNA]</scope>
    <source>
        <strain>35000HP / ATCC 700724</strain>
    </source>
</reference>
<gene>
    <name evidence="1" type="primary">dapF</name>
    <name type="ordered locus">HD_0026</name>
</gene>
<name>DAPF_HAEDU</name>
<sequence>MQFSKMHGLGNDFMVIDGVTQNVYLTEDMIRKLADRHYGVGFDQLLLVEPPYDPELDFHYRIFNADGSEVAQCGNGARCFARFVSLKGLINRSDMYVSTAKGKMVLTLVDEENVRVNMGEPIWEPAKIPFIANKFEKNYILRTDLQTVLCGVVSMGNPHCVLQVDDIEQATVHQLGALLEKHHRFPERANVGFMQIIDRHHIKLRVFERGVGETKACGSGACAAVAVGIMQGVLDANVQVSLPGGTLQIEWQGKGKPLYMTGTATHIYDGFIKL</sequence>
<dbReference type="EC" id="5.1.1.7" evidence="1"/>
<dbReference type="EMBL" id="AE017143">
    <property type="protein sequence ID" value="AAP95044.1"/>
    <property type="molecule type" value="Genomic_DNA"/>
</dbReference>
<dbReference type="RefSeq" id="WP_010944098.1">
    <property type="nucleotide sequence ID" value="NC_002940.2"/>
</dbReference>
<dbReference type="SMR" id="Q7VPN0"/>
<dbReference type="STRING" id="233412.HD_0026"/>
<dbReference type="KEGG" id="hdu:HD_0026"/>
<dbReference type="eggNOG" id="COG0253">
    <property type="taxonomic scope" value="Bacteria"/>
</dbReference>
<dbReference type="HOGENOM" id="CLU_053306_1_1_6"/>
<dbReference type="OrthoDB" id="9805408at2"/>
<dbReference type="UniPathway" id="UPA00034">
    <property type="reaction ID" value="UER00025"/>
</dbReference>
<dbReference type="Proteomes" id="UP000001022">
    <property type="component" value="Chromosome"/>
</dbReference>
<dbReference type="GO" id="GO:0005829">
    <property type="term" value="C:cytosol"/>
    <property type="evidence" value="ECO:0007669"/>
    <property type="project" value="TreeGrafter"/>
</dbReference>
<dbReference type="GO" id="GO:0008837">
    <property type="term" value="F:diaminopimelate epimerase activity"/>
    <property type="evidence" value="ECO:0007669"/>
    <property type="project" value="UniProtKB-UniRule"/>
</dbReference>
<dbReference type="GO" id="GO:0009089">
    <property type="term" value="P:lysine biosynthetic process via diaminopimelate"/>
    <property type="evidence" value="ECO:0007669"/>
    <property type="project" value="UniProtKB-UniRule"/>
</dbReference>
<dbReference type="FunFam" id="3.10.310.10:FF:000001">
    <property type="entry name" value="Diaminopimelate epimerase"/>
    <property type="match status" value="1"/>
</dbReference>
<dbReference type="FunFam" id="3.10.310.10:FF:000002">
    <property type="entry name" value="Diaminopimelate epimerase"/>
    <property type="match status" value="1"/>
</dbReference>
<dbReference type="Gene3D" id="3.10.310.10">
    <property type="entry name" value="Diaminopimelate Epimerase, Chain A, domain 1"/>
    <property type="match status" value="2"/>
</dbReference>
<dbReference type="HAMAP" id="MF_00197">
    <property type="entry name" value="DAP_epimerase"/>
    <property type="match status" value="1"/>
</dbReference>
<dbReference type="InterPro" id="IPR018510">
    <property type="entry name" value="DAP_epimerase_AS"/>
</dbReference>
<dbReference type="InterPro" id="IPR001653">
    <property type="entry name" value="DAP_epimerase_DapF"/>
</dbReference>
<dbReference type="NCBIfam" id="TIGR00652">
    <property type="entry name" value="DapF"/>
    <property type="match status" value="1"/>
</dbReference>
<dbReference type="PANTHER" id="PTHR31689:SF0">
    <property type="entry name" value="DIAMINOPIMELATE EPIMERASE"/>
    <property type="match status" value="1"/>
</dbReference>
<dbReference type="PANTHER" id="PTHR31689">
    <property type="entry name" value="DIAMINOPIMELATE EPIMERASE, CHLOROPLASTIC"/>
    <property type="match status" value="1"/>
</dbReference>
<dbReference type="Pfam" id="PF01678">
    <property type="entry name" value="DAP_epimerase"/>
    <property type="match status" value="2"/>
</dbReference>
<dbReference type="SUPFAM" id="SSF54506">
    <property type="entry name" value="Diaminopimelate epimerase-like"/>
    <property type="match status" value="1"/>
</dbReference>
<dbReference type="PROSITE" id="PS01326">
    <property type="entry name" value="DAP_EPIMERASE"/>
    <property type="match status" value="1"/>
</dbReference>
<comment type="function">
    <text evidence="1">Catalyzes the stereoinversion of LL-2,6-diaminopimelate (L,L-DAP) to meso-diaminopimelate (meso-DAP), a precursor of L-lysine and an essential component of the bacterial peptidoglycan.</text>
</comment>
<comment type="catalytic activity">
    <reaction evidence="1">
        <text>(2S,6S)-2,6-diaminopimelate = meso-2,6-diaminopimelate</text>
        <dbReference type="Rhea" id="RHEA:15393"/>
        <dbReference type="ChEBI" id="CHEBI:57609"/>
        <dbReference type="ChEBI" id="CHEBI:57791"/>
        <dbReference type="EC" id="5.1.1.7"/>
    </reaction>
</comment>
<comment type="pathway">
    <text evidence="1">Amino-acid biosynthesis; L-lysine biosynthesis via DAP pathway; DL-2,6-diaminopimelate from LL-2,6-diaminopimelate: step 1/1.</text>
</comment>
<comment type="subunit">
    <text evidence="1">Homodimer.</text>
</comment>
<comment type="subcellular location">
    <subcellularLocation>
        <location evidence="1">Cytoplasm</location>
    </subcellularLocation>
</comment>
<comment type="similarity">
    <text evidence="1">Belongs to the diaminopimelate epimerase family.</text>
</comment>
<feature type="chain" id="PRO_0000149841" description="Diaminopimelate epimerase">
    <location>
        <begin position="1"/>
        <end position="274"/>
    </location>
</feature>
<feature type="active site" description="Proton donor" evidence="1">
    <location>
        <position position="73"/>
    </location>
</feature>
<feature type="active site" description="Proton acceptor" evidence="1">
    <location>
        <position position="217"/>
    </location>
</feature>
<feature type="binding site" evidence="1">
    <location>
        <position position="11"/>
    </location>
    <ligand>
        <name>substrate</name>
    </ligand>
</feature>
<feature type="binding site" evidence="1">
    <location>
        <position position="44"/>
    </location>
    <ligand>
        <name>substrate</name>
    </ligand>
</feature>
<feature type="binding site" evidence="1">
    <location>
        <position position="64"/>
    </location>
    <ligand>
        <name>substrate</name>
    </ligand>
</feature>
<feature type="binding site" evidence="1">
    <location>
        <begin position="74"/>
        <end position="75"/>
    </location>
    <ligand>
        <name>substrate</name>
    </ligand>
</feature>
<feature type="binding site" evidence="1">
    <location>
        <position position="157"/>
    </location>
    <ligand>
        <name>substrate</name>
    </ligand>
</feature>
<feature type="binding site" evidence="1">
    <location>
        <position position="190"/>
    </location>
    <ligand>
        <name>substrate</name>
    </ligand>
</feature>
<feature type="binding site" evidence="1">
    <location>
        <begin position="208"/>
        <end position="209"/>
    </location>
    <ligand>
        <name>substrate</name>
    </ligand>
</feature>
<feature type="binding site" evidence="1">
    <location>
        <begin position="218"/>
        <end position="219"/>
    </location>
    <ligand>
        <name>substrate</name>
    </ligand>
</feature>
<feature type="site" description="Could be important to modulate the pK values of the two catalytic cysteine residues" evidence="1">
    <location>
        <position position="159"/>
    </location>
</feature>
<feature type="site" description="Could be important to modulate the pK values of the two catalytic cysteine residues" evidence="1">
    <location>
        <position position="208"/>
    </location>
</feature>
<feature type="site" description="Important for dimerization" evidence="1">
    <location>
        <position position="268"/>
    </location>
</feature>